<proteinExistence type="inferred from homology"/>
<organism>
    <name type="scientific">Candida glabrata (strain ATCC 2001 / BCRC 20586 / JCM 3761 / NBRC 0622 / NRRL Y-65 / CBS 138)</name>
    <name type="common">Yeast</name>
    <name type="synonym">Nakaseomyces glabratus</name>
    <dbReference type="NCBI Taxonomy" id="284593"/>
    <lineage>
        <taxon>Eukaryota</taxon>
        <taxon>Fungi</taxon>
        <taxon>Dikarya</taxon>
        <taxon>Ascomycota</taxon>
        <taxon>Saccharomycotina</taxon>
        <taxon>Saccharomycetes</taxon>
        <taxon>Saccharomycetales</taxon>
        <taxon>Saccharomycetaceae</taxon>
        <taxon>Nakaseomyces</taxon>
    </lineage>
</organism>
<reference key="1">
    <citation type="journal article" date="2004" name="Nature">
        <title>Genome evolution in yeasts.</title>
        <authorList>
            <person name="Dujon B."/>
            <person name="Sherman D."/>
            <person name="Fischer G."/>
            <person name="Durrens P."/>
            <person name="Casaregola S."/>
            <person name="Lafontaine I."/>
            <person name="de Montigny J."/>
            <person name="Marck C."/>
            <person name="Neuveglise C."/>
            <person name="Talla E."/>
            <person name="Goffard N."/>
            <person name="Frangeul L."/>
            <person name="Aigle M."/>
            <person name="Anthouard V."/>
            <person name="Babour A."/>
            <person name="Barbe V."/>
            <person name="Barnay S."/>
            <person name="Blanchin S."/>
            <person name="Beckerich J.-M."/>
            <person name="Beyne E."/>
            <person name="Bleykasten C."/>
            <person name="Boisrame A."/>
            <person name="Boyer J."/>
            <person name="Cattolico L."/>
            <person name="Confanioleri F."/>
            <person name="de Daruvar A."/>
            <person name="Despons L."/>
            <person name="Fabre E."/>
            <person name="Fairhead C."/>
            <person name="Ferry-Dumazet H."/>
            <person name="Groppi A."/>
            <person name="Hantraye F."/>
            <person name="Hennequin C."/>
            <person name="Jauniaux N."/>
            <person name="Joyet P."/>
            <person name="Kachouri R."/>
            <person name="Kerrest A."/>
            <person name="Koszul R."/>
            <person name="Lemaire M."/>
            <person name="Lesur I."/>
            <person name="Ma L."/>
            <person name="Muller H."/>
            <person name="Nicaud J.-M."/>
            <person name="Nikolski M."/>
            <person name="Oztas S."/>
            <person name="Ozier-Kalogeropoulos O."/>
            <person name="Pellenz S."/>
            <person name="Potier S."/>
            <person name="Richard G.-F."/>
            <person name="Straub M.-L."/>
            <person name="Suleau A."/>
            <person name="Swennen D."/>
            <person name="Tekaia F."/>
            <person name="Wesolowski-Louvel M."/>
            <person name="Westhof E."/>
            <person name="Wirth B."/>
            <person name="Zeniou-Meyer M."/>
            <person name="Zivanovic Y."/>
            <person name="Bolotin-Fukuhara M."/>
            <person name="Thierry A."/>
            <person name="Bouchier C."/>
            <person name="Caudron B."/>
            <person name="Scarpelli C."/>
            <person name="Gaillardin C."/>
            <person name="Weissenbach J."/>
            <person name="Wincker P."/>
            <person name="Souciet J.-L."/>
        </authorList>
    </citation>
    <scope>NUCLEOTIDE SEQUENCE [LARGE SCALE GENOMIC DNA]</scope>
    <source>
        <strain>ATCC 2001 / BCRC 20586 / JCM 3761 / NBRC 0622 / NRRL Y-65 / CBS 138</strain>
    </source>
</reference>
<evidence type="ECO:0000250" key="1">
    <source>
        <dbReference type="UniProtKB" id="P07255"/>
    </source>
</evidence>
<evidence type="ECO:0000255" key="2"/>
<evidence type="ECO:0000305" key="3"/>
<protein>
    <recommendedName>
        <fullName>Cytochrome c oxidase subunit 9, mitochondrial</fullName>
    </recommendedName>
    <alternativeName>
        <fullName>Cytochrome c oxidase polypeptide VIIA</fullName>
    </alternativeName>
</protein>
<comment type="function">
    <text evidence="1">Component of the cytochrome c oxidase, the last enzyme in the mitochondrial electron transport chain which drives oxidative phosphorylation. The respiratory chain contains 3 multisubunit complexes succinate dehydrogenase (complex II, CII), ubiquinol-cytochrome c oxidoreductase (cytochrome b-c1 complex, complex III, CIII) and cytochrome c oxidase (complex IV, CIV), that cooperate to transfer electrons derived from NADH and succinate to molecular oxygen, creating an electrochemical gradient over the inner membrane that drives transmembrane transport and the ATP synthase. Cytochrome c oxidase is the component of the respiratory chain that catalyzes the reduction of oxygen to water. Electrons originating from reduced cytochrome c in the intermembrane space (IMS) are transferred via the dinuclear copper A center (CU(A)) of subunit 2 and heme A of subunit 1 to the active site in subunit 1, a binuclear center (BNC) formed by heme A3 and copper B (CU(B)). The BNC reduces molecular oxygen to 2 water molecules using 4 electrons from cytochrome c in the IMS and 4 protons from the mitochondrial matrix.</text>
</comment>
<comment type="pathway">
    <text evidence="1">Energy metabolism; oxidative phosphorylation.</text>
</comment>
<comment type="subunit">
    <text evidence="1">Component of the cytochrome c oxidase (complex IV, CIV), a multisubunit enzyme composed of a catalytic core of 3 subunits and several supernumerary subunits. The complex exists as a monomer or a dimer and forms supercomplexes (SCs) in the inner mitochondrial membrane with ubiquinol-cytochrome c oxidoreductase (cytochrome b-c1 complex, complex III, CIII).</text>
</comment>
<comment type="subcellular location">
    <subcellularLocation>
        <location evidence="1">Mitochondrion inner membrane</location>
        <topology evidence="1">Single-pass membrane protein</topology>
    </subcellularLocation>
</comment>
<comment type="similarity">
    <text evidence="3">Belongs to the fungal cytochrome c oxidase subunit 7a family.</text>
</comment>
<keyword id="KW-0165">Cleavage on pair of basic residues</keyword>
<keyword id="KW-0472">Membrane</keyword>
<keyword id="KW-0496">Mitochondrion</keyword>
<keyword id="KW-0999">Mitochondrion inner membrane</keyword>
<keyword id="KW-0560">Oxidoreductase</keyword>
<keyword id="KW-1185">Reference proteome</keyword>
<keyword id="KW-0812">Transmembrane</keyword>
<keyword id="KW-1133">Transmembrane helix</keyword>
<sequence>MSALAPITGTLKKRIITDIVIGFSLGGVMASYWWWGFHKNVIDRREAFYADLAEKKKAEN</sequence>
<feature type="chain" id="PRO_0000041765" description="Cytochrome c oxidase subunit 9, mitochondrial">
    <location>
        <begin position="1"/>
        <end position="57"/>
    </location>
</feature>
<feature type="propeptide" id="PRO_0000041766" description="Removed in mature form" evidence="1">
    <location>
        <begin position="58"/>
        <end position="60"/>
    </location>
</feature>
<feature type="topological domain" description="Mitochondrial matrix" evidence="1">
    <location>
        <begin position="1"/>
        <end position="15"/>
    </location>
</feature>
<feature type="transmembrane region" description="Helical" evidence="2">
    <location>
        <begin position="16"/>
        <end position="38"/>
    </location>
</feature>
<feature type="topological domain" description="Mitochondrial intermembrane" evidence="1">
    <location>
        <begin position="39"/>
        <end position="57"/>
    </location>
</feature>
<name>COX9_CANGA</name>
<dbReference type="EMBL" id="CR380950">
    <property type="protein sequence ID" value="CAG58357.1"/>
    <property type="molecule type" value="Genomic_DNA"/>
</dbReference>
<dbReference type="RefSeq" id="XP_445446.1">
    <property type="nucleotide sequence ID" value="XM_445446.1"/>
</dbReference>
<dbReference type="SMR" id="Q6FWE8"/>
<dbReference type="FunCoup" id="Q6FWE8">
    <property type="interactions" value="120"/>
</dbReference>
<dbReference type="STRING" id="284593.Q6FWE8"/>
<dbReference type="EnsemblFungi" id="CAGL0D00748g-T">
    <property type="protein sequence ID" value="CAGL0D00748g-T-p1"/>
    <property type="gene ID" value="CAGL0D00748g"/>
</dbReference>
<dbReference type="KEGG" id="cgr:2887216"/>
<dbReference type="CGD" id="CAL0128513">
    <property type="gene designation" value="CAGL0D00748g"/>
</dbReference>
<dbReference type="VEuPathDB" id="FungiDB:B1J91_D00748g"/>
<dbReference type="VEuPathDB" id="FungiDB:CAGL0D00748g"/>
<dbReference type="eggNOG" id="ENOG502SBM8">
    <property type="taxonomic scope" value="Eukaryota"/>
</dbReference>
<dbReference type="HOGENOM" id="CLU_196969_0_0_1"/>
<dbReference type="InParanoid" id="Q6FWE8"/>
<dbReference type="OMA" id="ASYWWWG"/>
<dbReference type="UniPathway" id="UPA00705"/>
<dbReference type="Proteomes" id="UP000002428">
    <property type="component" value="Chromosome D"/>
</dbReference>
<dbReference type="GO" id="GO:0005743">
    <property type="term" value="C:mitochondrial inner membrane"/>
    <property type="evidence" value="ECO:0007669"/>
    <property type="project" value="UniProtKB-SubCell"/>
</dbReference>
<dbReference type="GO" id="GO:0045277">
    <property type="term" value="C:respiratory chain complex IV"/>
    <property type="evidence" value="ECO:0007669"/>
    <property type="project" value="EnsemblFungi"/>
</dbReference>
<dbReference type="GO" id="GO:0004129">
    <property type="term" value="F:cytochrome-c oxidase activity"/>
    <property type="evidence" value="ECO:0007669"/>
    <property type="project" value="EnsemblFungi"/>
</dbReference>
<dbReference type="GO" id="GO:0006123">
    <property type="term" value="P:mitochondrial electron transport, cytochrome c to oxygen"/>
    <property type="evidence" value="ECO:0007669"/>
    <property type="project" value="EnsemblFungi"/>
</dbReference>
<dbReference type="CDD" id="cd22888">
    <property type="entry name" value="CcO_VIIa_fungal"/>
    <property type="match status" value="1"/>
</dbReference>
<dbReference type="InterPro" id="IPR014368">
    <property type="entry name" value="Cyt_c_oxidase_su7a_fun"/>
</dbReference>
<dbReference type="PANTHER" id="PTHR28264:SF1">
    <property type="entry name" value="CYTOCHROME C OXIDASE SUBUNIT 6C"/>
    <property type="match status" value="1"/>
</dbReference>
<dbReference type="PANTHER" id="PTHR28264">
    <property type="entry name" value="CYTOCHROME C OXIDASE SUBUNIT 7A"/>
    <property type="match status" value="1"/>
</dbReference>
<dbReference type="PIRSF" id="PIRSF000283">
    <property type="entry name" value="COX9"/>
    <property type="match status" value="1"/>
</dbReference>
<accession>Q6FWE8</accession>
<gene>
    <name type="primary">COX9</name>
    <name type="ordered locus">CAGL0D00748g</name>
</gene>